<feature type="chain" id="PRO_1000146670" description="Formate--tetrahydrofolate ligase">
    <location>
        <begin position="1"/>
        <end position="556"/>
    </location>
</feature>
<feature type="binding site" evidence="1">
    <location>
        <begin position="64"/>
        <end position="71"/>
    </location>
    <ligand>
        <name>ATP</name>
        <dbReference type="ChEBI" id="CHEBI:30616"/>
    </ligand>
</feature>
<keyword id="KW-0067">ATP-binding</keyword>
<keyword id="KW-0436">Ligase</keyword>
<keyword id="KW-0547">Nucleotide-binding</keyword>
<keyword id="KW-0554">One-carbon metabolism</keyword>
<proteinExistence type="inferred from homology"/>
<organism>
    <name type="scientific">Actinobacillus pleuropneumoniae serotype 7 (strain AP76)</name>
    <dbReference type="NCBI Taxonomy" id="537457"/>
    <lineage>
        <taxon>Bacteria</taxon>
        <taxon>Pseudomonadati</taxon>
        <taxon>Pseudomonadota</taxon>
        <taxon>Gammaproteobacteria</taxon>
        <taxon>Pasteurellales</taxon>
        <taxon>Pasteurellaceae</taxon>
        <taxon>Actinobacillus</taxon>
    </lineage>
</organism>
<gene>
    <name evidence="1" type="primary">fhs</name>
    <name type="ordered locus">APP7_0543</name>
</gene>
<accession>B3GX43</accession>
<comment type="catalytic activity">
    <reaction evidence="1">
        <text>(6S)-5,6,7,8-tetrahydrofolate + formate + ATP = (6R)-10-formyltetrahydrofolate + ADP + phosphate</text>
        <dbReference type="Rhea" id="RHEA:20221"/>
        <dbReference type="ChEBI" id="CHEBI:15740"/>
        <dbReference type="ChEBI" id="CHEBI:30616"/>
        <dbReference type="ChEBI" id="CHEBI:43474"/>
        <dbReference type="ChEBI" id="CHEBI:57453"/>
        <dbReference type="ChEBI" id="CHEBI:195366"/>
        <dbReference type="ChEBI" id="CHEBI:456216"/>
        <dbReference type="EC" id="6.3.4.3"/>
    </reaction>
</comment>
<comment type="pathway">
    <text evidence="1">One-carbon metabolism; tetrahydrofolate interconversion.</text>
</comment>
<comment type="similarity">
    <text evidence="1">Belongs to the formate--tetrahydrofolate ligase family.</text>
</comment>
<protein>
    <recommendedName>
        <fullName evidence="1">Formate--tetrahydrofolate ligase</fullName>
        <ecNumber evidence="1">6.3.4.3</ecNumber>
    </recommendedName>
    <alternativeName>
        <fullName evidence="1">Formyltetrahydrofolate synthetase</fullName>
        <shortName evidence="1">FHS</shortName>
        <shortName evidence="1">FTHFS</shortName>
    </alternativeName>
</protein>
<name>FTHS_ACTP7</name>
<reference key="1">
    <citation type="submission" date="2008-06" db="EMBL/GenBank/DDBJ databases">
        <title>Genome and proteome analysis of A. pleuropneumoniae serotype 7.</title>
        <authorList>
            <person name="Linke B."/>
            <person name="Buettner F."/>
            <person name="Martinez-Arias R."/>
            <person name="Goesmann A."/>
            <person name="Baltes N."/>
            <person name="Tegetmeyer H."/>
            <person name="Singh M."/>
            <person name="Gerlach G.F."/>
        </authorList>
    </citation>
    <scope>NUCLEOTIDE SEQUENCE [LARGE SCALE GENOMIC DNA]</scope>
    <source>
        <strain>AP76</strain>
    </source>
</reference>
<sequence>MKSDVEIAQAATMQPIHKIAEKLGLNADQIEQYGKYKAKINPTDAFKLPAKNGKLILVTAINPTPAGEGKTTVTIGLTDALNQLGKNAVVAAREPSLGPVFGVKGGAAGGGYAQVLPMEDINLHFTGDFHAITSANNLLAALLDNHIYQGNALNIDTKRVLWRRVIDMNDRQLRNVLGGLGNPTDGVIRPDGFDITVASEVMAIFCLAKDLADLKTRLGNILVAYTKDKQPVYAKDLNAHGAMAALLKDAIKPNLVQTIEGSPAFIHGGPFANIAHGCNSVTATRLALHLGDYAVTEAGFGADLGAEKFCDIKCRLADLKPDVAVVVATVKALKYNGGVEKANLAEENLTALQQGLPNLLKHISNLKNVFGLPVVVALNRFVSDTDAELALIQTACAKQGVEVSLTEVWGKGGAGGVDLAQKVLKAIDEQENRFNFVYDVNESVQNKIKAIAQKIYGADDVNFSAEALAEIKNLEKLGLDKLPICMAKTQYSLSDNAKLLGCPSGFTVTVRSISVSAGAGFIVAICGSIMRMPGLPKVPAANRIDVDENGLITGLF</sequence>
<evidence type="ECO:0000255" key="1">
    <source>
        <dbReference type="HAMAP-Rule" id="MF_01543"/>
    </source>
</evidence>
<dbReference type="EC" id="6.3.4.3" evidence="1"/>
<dbReference type="EMBL" id="CP001091">
    <property type="protein sequence ID" value="ACE61195.1"/>
    <property type="molecule type" value="Genomic_DNA"/>
</dbReference>
<dbReference type="RefSeq" id="WP_005596596.1">
    <property type="nucleotide sequence ID" value="NC_010939.1"/>
</dbReference>
<dbReference type="SMR" id="B3GX43"/>
<dbReference type="GeneID" id="48598637"/>
<dbReference type="KEGG" id="apa:APP7_0543"/>
<dbReference type="HOGENOM" id="CLU_003601_3_3_6"/>
<dbReference type="UniPathway" id="UPA00193"/>
<dbReference type="Proteomes" id="UP000001226">
    <property type="component" value="Chromosome"/>
</dbReference>
<dbReference type="GO" id="GO:0005524">
    <property type="term" value="F:ATP binding"/>
    <property type="evidence" value="ECO:0007669"/>
    <property type="project" value="UniProtKB-UniRule"/>
</dbReference>
<dbReference type="GO" id="GO:0004329">
    <property type="term" value="F:formate-tetrahydrofolate ligase activity"/>
    <property type="evidence" value="ECO:0007669"/>
    <property type="project" value="UniProtKB-UniRule"/>
</dbReference>
<dbReference type="GO" id="GO:0035999">
    <property type="term" value="P:tetrahydrofolate interconversion"/>
    <property type="evidence" value="ECO:0007669"/>
    <property type="project" value="UniProtKB-UniRule"/>
</dbReference>
<dbReference type="CDD" id="cd00477">
    <property type="entry name" value="FTHFS"/>
    <property type="match status" value="1"/>
</dbReference>
<dbReference type="FunFam" id="3.30.1510.10:FF:000001">
    <property type="entry name" value="Formate--tetrahydrofolate ligase"/>
    <property type="match status" value="1"/>
</dbReference>
<dbReference type="FunFam" id="3.10.410.10:FF:000001">
    <property type="entry name" value="Putative formate--tetrahydrofolate ligase"/>
    <property type="match status" value="1"/>
</dbReference>
<dbReference type="Gene3D" id="3.30.1510.10">
    <property type="entry name" value="Domain 2, N(10)-formyltetrahydrofolate synthetase"/>
    <property type="match status" value="1"/>
</dbReference>
<dbReference type="Gene3D" id="3.10.410.10">
    <property type="entry name" value="Formyltetrahydrofolate synthetase, domain 3"/>
    <property type="match status" value="1"/>
</dbReference>
<dbReference type="Gene3D" id="3.40.50.300">
    <property type="entry name" value="P-loop containing nucleotide triphosphate hydrolases"/>
    <property type="match status" value="1"/>
</dbReference>
<dbReference type="HAMAP" id="MF_01543">
    <property type="entry name" value="FTHFS"/>
    <property type="match status" value="1"/>
</dbReference>
<dbReference type="InterPro" id="IPR000559">
    <property type="entry name" value="Formate_THF_ligase"/>
</dbReference>
<dbReference type="InterPro" id="IPR020628">
    <property type="entry name" value="Formate_THF_ligase_CS"/>
</dbReference>
<dbReference type="InterPro" id="IPR027417">
    <property type="entry name" value="P-loop_NTPase"/>
</dbReference>
<dbReference type="NCBIfam" id="NF010030">
    <property type="entry name" value="PRK13505.1"/>
    <property type="match status" value="1"/>
</dbReference>
<dbReference type="Pfam" id="PF01268">
    <property type="entry name" value="FTHFS"/>
    <property type="match status" value="1"/>
</dbReference>
<dbReference type="SUPFAM" id="SSF52540">
    <property type="entry name" value="P-loop containing nucleoside triphosphate hydrolases"/>
    <property type="match status" value="1"/>
</dbReference>
<dbReference type="PROSITE" id="PS00721">
    <property type="entry name" value="FTHFS_1"/>
    <property type="match status" value="1"/>
</dbReference>